<protein>
    <recommendedName>
        <fullName>Dymeclin</fullName>
    </recommendedName>
</protein>
<organism>
    <name type="scientific">Pongo abelii</name>
    <name type="common">Sumatran orangutan</name>
    <name type="synonym">Pongo pygmaeus abelii</name>
    <dbReference type="NCBI Taxonomy" id="9601"/>
    <lineage>
        <taxon>Eukaryota</taxon>
        <taxon>Metazoa</taxon>
        <taxon>Chordata</taxon>
        <taxon>Craniata</taxon>
        <taxon>Vertebrata</taxon>
        <taxon>Euteleostomi</taxon>
        <taxon>Mammalia</taxon>
        <taxon>Eutheria</taxon>
        <taxon>Euarchontoglires</taxon>
        <taxon>Primates</taxon>
        <taxon>Haplorrhini</taxon>
        <taxon>Catarrhini</taxon>
        <taxon>Hominidae</taxon>
        <taxon>Pongo</taxon>
    </lineage>
</organism>
<gene>
    <name type="primary">DYM</name>
</gene>
<name>DYM_PONAB</name>
<accession>Q5RAW5</accession>
<proteinExistence type="evidence at transcript level"/>
<feature type="initiator methionine" description="Removed" evidence="2">
    <location>
        <position position="1"/>
    </location>
</feature>
<feature type="chain" id="PRO_0000086885" description="Dymeclin">
    <location>
        <begin position="2"/>
        <end position="669"/>
    </location>
</feature>
<feature type="lipid moiety-binding region" description="N-myristoyl glycine" evidence="2">
    <location>
        <position position="2"/>
    </location>
</feature>
<reference key="1">
    <citation type="submission" date="2004-11" db="EMBL/GenBank/DDBJ databases">
        <authorList>
            <consortium name="The German cDNA consortium"/>
        </authorList>
    </citation>
    <scope>NUCLEOTIDE SEQUENCE [LARGE SCALE MRNA]</scope>
    <source>
        <tissue>Kidney</tissue>
    </source>
</reference>
<dbReference type="EMBL" id="CR858896">
    <property type="protein sequence ID" value="CAH91095.1"/>
    <property type="molecule type" value="mRNA"/>
</dbReference>
<dbReference type="RefSeq" id="NP_001127375.1">
    <property type="nucleotide sequence ID" value="NM_001133903.1"/>
</dbReference>
<dbReference type="FunCoup" id="Q5RAW5">
    <property type="interactions" value="2878"/>
</dbReference>
<dbReference type="STRING" id="9601.ENSPPYP00000010279"/>
<dbReference type="GeneID" id="100174440"/>
<dbReference type="KEGG" id="pon:100174440"/>
<dbReference type="CTD" id="54808"/>
<dbReference type="eggNOG" id="KOG2225">
    <property type="taxonomic scope" value="Eukaryota"/>
</dbReference>
<dbReference type="InParanoid" id="Q5RAW5"/>
<dbReference type="OrthoDB" id="10253409at2759"/>
<dbReference type="Proteomes" id="UP000001595">
    <property type="component" value="Unplaced"/>
</dbReference>
<dbReference type="GO" id="GO:0005737">
    <property type="term" value="C:cytoplasm"/>
    <property type="evidence" value="ECO:0000250"/>
    <property type="project" value="UniProtKB"/>
</dbReference>
<dbReference type="GO" id="GO:0005794">
    <property type="term" value="C:Golgi apparatus"/>
    <property type="evidence" value="ECO:0000250"/>
    <property type="project" value="UniProtKB"/>
</dbReference>
<dbReference type="GO" id="GO:0016020">
    <property type="term" value="C:membrane"/>
    <property type="evidence" value="ECO:0007669"/>
    <property type="project" value="UniProtKB-SubCell"/>
</dbReference>
<dbReference type="GO" id="GO:0060348">
    <property type="term" value="P:bone development"/>
    <property type="evidence" value="ECO:0000250"/>
    <property type="project" value="UniProtKB"/>
</dbReference>
<dbReference type="GO" id="GO:0007030">
    <property type="term" value="P:Golgi organization"/>
    <property type="evidence" value="ECO:0000250"/>
    <property type="project" value="UniProtKB"/>
</dbReference>
<dbReference type="InterPro" id="IPR019142">
    <property type="entry name" value="Dymeclin"/>
</dbReference>
<dbReference type="PANTHER" id="PTHR12895">
    <property type="entry name" value="DYMECLIN"/>
    <property type="match status" value="1"/>
</dbReference>
<dbReference type="PANTHER" id="PTHR12895:SF9">
    <property type="entry name" value="DYMECLIN"/>
    <property type="match status" value="1"/>
</dbReference>
<dbReference type="Pfam" id="PF09742">
    <property type="entry name" value="Dymeclin"/>
    <property type="match status" value="1"/>
</dbReference>
<keyword id="KW-0963">Cytoplasm</keyword>
<keyword id="KW-0333">Golgi apparatus</keyword>
<keyword id="KW-0449">Lipoprotein</keyword>
<keyword id="KW-0472">Membrane</keyword>
<keyword id="KW-0519">Myristate</keyword>
<keyword id="KW-1185">Reference proteome</keyword>
<sequence length="669" mass="76027">MGSNSSRIGDLPKNQYLKKLSGTESISENDPFWNQLLSFSFPAPTSSTELKLLEEATISVCRSLVENNPRTGNLGALIKVFLSRTKELKLSAECQNHIFIWQTHNALFIICCLLKVFICQMSEEELQLHFTYEEKSPGNYSSDSEDLLEELLCCLMQLITDIPLLDITYEISVEAISTMVVFLSCQLFHKEVLRQSISHKYLMRGPCLPYTSKLVKTLLYNFIRQEKPPPPGAHVFPQQSDGGGLLYGLASGVATGLWTVFTLGGVGSKVAASPELSSPLANQSLLLLLVLANLTDASDAPNPYRQAIMSFKNTQDSSPFPPLIPHAFQINFNSLYTALCEQQTSDQATLLLYTLLHQNSNIRTYMLARTDMENLVLPILEILYHVEERNSHHVYMALIILLILTEDDGFNRSIHEVILKNITWYSERVLTEISLGSLLILVVIRTIQYNMTRTRDKYLHTNCLAALANMSAQFRSLHQYAAQRIISLFSLLSKKHNKVLEQATQSLRGSLSSNDVPLPDYAQDLNVIEEVIRMMLEIINSCLTNSLHHNPNLVYALLYKRDLFEQFRTHPSFQDIMQNIDLVITFFSSRLLQAGAELSVERVLEIIKQGVVALPKDRLKKFPELKFKYVEEEQPEEFFIPYVWSLVYNSAVGLYWNPQDIQLFTMDSD</sequence>
<evidence type="ECO:0000250" key="1"/>
<evidence type="ECO:0000250" key="2">
    <source>
        <dbReference type="UniProtKB" id="Q7RTS9"/>
    </source>
</evidence>
<evidence type="ECO:0000305" key="3"/>
<comment type="function">
    <text evidence="1">Necessary for correct organization of Golgi apparatus. Involved in bone development.</text>
</comment>
<comment type="subunit">
    <text evidence="1">Interacts with GOLM1 and PPIB.</text>
</comment>
<comment type="subcellular location">
    <subcellularLocation>
        <location>Cytoplasm</location>
    </subcellularLocation>
    <subcellularLocation>
        <location evidence="1">Golgi apparatus</location>
    </subcellularLocation>
    <subcellularLocation>
        <location evidence="2">Membrane</location>
        <topology evidence="2">Lipid-anchor</topology>
    </subcellularLocation>
    <text evidence="1">Sequence analysis programs predict 1 transmembrane region. However, it has been shown in human that it is not a stably anchored transmembrane protein but it weakly associates with the Golgi apparatus and shuttles between the Golgi and the cytosol (By similarity).</text>
</comment>
<comment type="PTM">
    <text evidence="1">Myristoylated in vitro; myristoylation is not essential for protein targeting to Golgi compartment.</text>
</comment>
<comment type="similarity">
    <text evidence="3">Belongs to the dymeclin family.</text>
</comment>